<keyword id="KW-0479">Metal-binding</keyword>
<keyword id="KW-0533">Nickel</keyword>
<keyword id="KW-1185">Reference proteome</keyword>
<keyword id="KW-0862">Zinc</keyword>
<gene>
    <name evidence="1" type="primary">hypA</name>
    <name type="ordered locus">STM2854</name>
</gene>
<feature type="chain" id="PRO_0000129061" description="Hydrogenase maturation factor HypA">
    <location>
        <begin position="1"/>
        <end position="118"/>
    </location>
</feature>
<feature type="binding site" evidence="1">
    <location>
        <position position="2"/>
    </location>
    <ligand>
        <name>Ni(2+)</name>
        <dbReference type="ChEBI" id="CHEBI:49786"/>
    </ligand>
</feature>
<feature type="binding site" evidence="1">
    <location>
        <position position="73"/>
    </location>
    <ligand>
        <name>Zn(2+)</name>
        <dbReference type="ChEBI" id="CHEBI:29105"/>
    </ligand>
</feature>
<feature type="binding site" evidence="1">
    <location>
        <position position="76"/>
    </location>
    <ligand>
        <name>Zn(2+)</name>
        <dbReference type="ChEBI" id="CHEBI:29105"/>
    </ligand>
</feature>
<feature type="binding site" evidence="1">
    <location>
        <position position="90"/>
    </location>
    <ligand>
        <name>Zn(2+)</name>
        <dbReference type="ChEBI" id="CHEBI:29105"/>
    </ligand>
</feature>
<feature type="binding site" evidence="1">
    <location>
        <position position="93"/>
    </location>
    <ligand>
        <name>Zn(2+)</name>
        <dbReference type="ChEBI" id="CHEBI:29105"/>
    </ligand>
</feature>
<reference key="1">
    <citation type="journal article" date="2001" name="Nature">
        <title>Complete genome sequence of Salmonella enterica serovar Typhimurium LT2.</title>
        <authorList>
            <person name="McClelland M."/>
            <person name="Sanderson K.E."/>
            <person name="Spieth J."/>
            <person name="Clifton S.W."/>
            <person name="Latreille P."/>
            <person name="Courtney L."/>
            <person name="Porwollik S."/>
            <person name="Ali J."/>
            <person name="Dante M."/>
            <person name="Du F."/>
            <person name="Hou S."/>
            <person name="Layman D."/>
            <person name="Leonard S."/>
            <person name="Nguyen C."/>
            <person name="Scott K."/>
            <person name="Holmes A."/>
            <person name="Grewal N."/>
            <person name="Mulvaney E."/>
            <person name="Ryan E."/>
            <person name="Sun H."/>
            <person name="Florea L."/>
            <person name="Miller W."/>
            <person name="Stoneking T."/>
            <person name="Nhan M."/>
            <person name="Waterston R."/>
            <person name="Wilson R.K."/>
        </authorList>
    </citation>
    <scope>NUCLEOTIDE SEQUENCE [LARGE SCALE GENOMIC DNA]</scope>
    <source>
        <strain>LT2 / SGSC1412 / ATCC 700720</strain>
    </source>
</reference>
<proteinExistence type="inferred from homology"/>
<dbReference type="EMBL" id="AE006468">
    <property type="protein sequence ID" value="AAL21734.1"/>
    <property type="molecule type" value="Genomic_DNA"/>
</dbReference>
<dbReference type="RefSeq" id="NP_461775.1">
    <property type="nucleotide sequence ID" value="NC_003197.2"/>
</dbReference>
<dbReference type="RefSeq" id="WP_000544461.1">
    <property type="nucleotide sequence ID" value="NC_003197.2"/>
</dbReference>
<dbReference type="SMR" id="P64419"/>
<dbReference type="STRING" id="99287.STM2854"/>
<dbReference type="PaxDb" id="99287-STM2854"/>
<dbReference type="GeneID" id="1254377"/>
<dbReference type="KEGG" id="stm:STM2854"/>
<dbReference type="PATRIC" id="fig|99287.12.peg.3010"/>
<dbReference type="HOGENOM" id="CLU_126929_0_0_6"/>
<dbReference type="OMA" id="RITAVWM"/>
<dbReference type="PhylomeDB" id="P64419"/>
<dbReference type="BioCyc" id="SENT99287:STM2854-MONOMER"/>
<dbReference type="Proteomes" id="UP000001014">
    <property type="component" value="Chromosome"/>
</dbReference>
<dbReference type="GO" id="GO:0016151">
    <property type="term" value="F:nickel cation binding"/>
    <property type="evidence" value="ECO:0000318"/>
    <property type="project" value="GO_Central"/>
</dbReference>
<dbReference type="GO" id="GO:0008270">
    <property type="term" value="F:zinc ion binding"/>
    <property type="evidence" value="ECO:0000318"/>
    <property type="project" value="GO_Central"/>
</dbReference>
<dbReference type="GO" id="GO:0051604">
    <property type="term" value="P:protein maturation"/>
    <property type="evidence" value="ECO:0000318"/>
    <property type="project" value="GO_Central"/>
</dbReference>
<dbReference type="GO" id="GO:0036211">
    <property type="term" value="P:protein modification process"/>
    <property type="evidence" value="ECO:0007669"/>
    <property type="project" value="UniProtKB-UniRule"/>
</dbReference>
<dbReference type="FunFam" id="3.30.2320.80:FF:000001">
    <property type="entry name" value="Hydrogenase maturation factor HypA"/>
    <property type="match status" value="1"/>
</dbReference>
<dbReference type="Gene3D" id="3.30.2320.80">
    <property type="match status" value="1"/>
</dbReference>
<dbReference type="HAMAP" id="MF_00213">
    <property type="entry name" value="HypA_HybF"/>
    <property type="match status" value="1"/>
</dbReference>
<dbReference type="InterPro" id="IPR020538">
    <property type="entry name" value="Hydgase_Ni_incorp_HypA/HybF_CS"/>
</dbReference>
<dbReference type="InterPro" id="IPR000688">
    <property type="entry name" value="HypA/HybF"/>
</dbReference>
<dbReference type="NCBIfam" id="TIGR00100">
    <property type="entry name" value="hypA"/>
    <property type="match status" value="1"/>
</dbReference>
<dbReference type="NCBIfam" id="NF002979">
    <property type="entry name" value="PRK03681.1"/>
    <property type="match status" value="1"/>
</dbReference>
<dbReference type="NCBIfam" id="NF009046">
    <property type="entry name" value="PRK12380.1"/>
    <property type="match status" value="1"/>
</dbReference>
<dbReference type="PANTHER" id="PTHR34535">
    <property type="entry name" value="HYDROGENASE MATURATION FACTOR HYPA"/>
    <property type="match status" value="1"/>
</dbReference>
<dbReference type="PANTHER" id="PTHR34535:SF3">
    <property type="entry name" value="HYDROGENASE MATURATION FACTOR HYPA"/>
    <property type="match status" value="1"/>
</dbReference>
<dbReference type="Pfam" id="PF01155">
    <property type="entry name" value="HypA"/>
    <property type="match status" value="1"/>
</dbReference>
<dbReference type="PIRSF" id="PIRSF004761">
    <property type="entry name" value="Hydrgn_mat_HypA"/>
    <property type="match status" value="1"/>
</dbReference>
<dbReference type="PROSITE" id="PS01249">
    <property type="entry name" value="HYPA"/>
    <property type="match status" value="1"/>
</dbReference>
<comment type="function">
    <text evidence="1">Involved in the maturation of [NiFe] hydrogenases. Required for nickel insertion into the metal center of the hydrogenase.</text>
</comment>
<comment type="similarity">
    <text evidence="1">Belongs to the HypA/HybF family.</text>
</comment>
<evidence type="ECO:0000255" key="1">
    <source>
        <dbReference type="HAMAP-Rule" id="MF_00213"/>
    </source>
</evidence>
<organism>
    <name type="scientific">Salmonella typhimurium (strain LT2 / SGSC1412 / ATCC 700720)</name>
    <dbReference type="NCBI Taxonomy" id="99287"/>
    <lineage>
        <taxon>Bacteria</taxon>
        <taxon>Pseudomonadati</taxon>
        <taxon>Pseudomonadota</taxon>
        <taxon>Gammaproteobacteria</taxon>
        <taxon>Enterobacterales</taxon>
        <taxon>Enterobacteriaceae</taxon>
        <taxon>Salmonella</taxon>
    </lineage>
</organism>
<sequence>MHEITLCQRALELIEQQASAYGAKRVTAVWIKIGAFSCVETSALSFCFDLVCRGTIAEGCKLHLEEQEAECWCEHCQQYVTLLTHRVRRCPQCHSDTLRIVADDGLQIRRIEIDETED</sequence>
<name>HYPA_SALTY</name>
<protein>
    <recommendedName>
        <fullName evidence="1">Hydrogenase maturation factor HypA</fullName>
    </recommendedName>
</protein>
<accession>P64419</accession>
<accession>Q8XGG9</accession>